<comment type="function">
    <text evidence="4">Methylmalonyl-CoA epimerase involved in propionyl-CoA metabolism.</text>
</comment>
<comment type="catalytic activity">
    <reaction evidence="4">
        <text>(R)-methylmalonyl-CoA = (S)-methylmalonyl-CoA</text>
        <dbReference type="Rhea" id="RHEA:20553"/>
        <dbReference type="ChEBI" id="CHEBI:57326"/>
        <dbReference type="ChEBI" id="CHEBI:57327"/>
        <dbReference type="EC" id="5.1.99.1"/>
    </reaction>
    <physiologicalReaction direction="right-to-left" evidence="10">
        <dbReference type="Rhea" id="RHEA:20555"/>
    </physiologicalReaction>
</comment>
<comment type="interaction">
    <interactant intactId="EBI-10292326">
        <id>Q96PE7</id>
    </interactant>
    <interactant intactId="EBI-741181">
        <id>Q6RW13</id>
        <label>AGTRAP</label>
    </interactant>
    <organismsDiffer>false</organismsDiffer>
    <experiments>4</experiments>
</comment>
<comment type="interaction">
    <interactant intactId="EBI-10292326">
        <id>Q96PE7</id>
    </interactant>
    <interactant intactId="EBI-11522760">
        <id>Q6RW13-2</id>
        <label>AGTRAP</label>
    </interactant>
    <organismsDiffer>false</organismsDiffer>
    <experiments>6</experiments>
</comment>
<comment type="interaction">
    <interactant intactId="EBI-10292326">
        <id>Q96PE7</id>
    </interactant>
    <interactant intactId="EBI-712921">
        <id>P60033</id>
        <label>CD81</label>
    </interactant>
    <organismsDiffer>false</organismsDiffer>
    <experiments>3</experiments>
</comment>
<comment type="interaction">
    <interactant intactId="EBI-10292326">
        <id>Q96PE7</id>
    </interactant>
    <interactant intactId="EBI-2548702">
        <id>Q96DZ9</id>
        <label>CMTM5</label>
    </interactant>
    <organismsDiffer>false</organismsDiffer>
    <experiments>4</experiments>
</comment>
<comment type="interaction">
    <interactant intactId="EBI-10292326">
        <id>Q96PE7</id>
    </interactant>
    <interactant intactId="EBI-11522780">
        <id>Q96DZ9-2</id>
        <label>CMTM5</label>
    </interactant>
    <organismsDiffer>false</organismsDiffer>
    <experiments>6</experiments>
</comment>
<comment type="interaction">
    <interactant intactId="EBI-10292326">
        <id>Q96PE7</id>
    </interactant>
    <interactant intactId="EBI-727240">
        <id>Q9UNK0</id>
        <label>STX8</label>
    </interactant>
    <organismsDiffer>false</organismsDiffer>
    <experiments>3</experiments>
</comment>
<comment type="subcellular location">
    <subcellularLocation>
        <location evidence="9">Mitochondrion</location>
    </subcellularLocation>
</comment>
<comment type="disease" evidence="6">
    <disease id="DI-01974">
        <name>Methylmalonyl-CoA epimerase deficiency</name>
        <acronym>MCEED</acronym>
        <description>Autosomal recessive inborn error of amino acid metabolism, involving valine, threonine, isoleucine and methionine. This organic aciduria may present in the neonatal period with life-threatening metabolic acidosis, hyperammonemia, feeding difficulties, pancytopenia and coma.</description>
        <dbReference type="MIM" id="251120"/>
    </disease>
    <text>The disease is caused by variants affecting the gene represented in this entry.</text>
</comment>
<comment type="similarity">
    <text evidence="9">Belongs to the methylmalonyl-CoA epimerase family.</text>
</comment>
<evidence type="ECO:0000250" key="1">
    <source>
        <dbReference type="UniProtKB" id="Q9D1I5"/>
    </source>
</evidence>
<evidence type="ECO:0000255" key="2"/>
<evidence type="ECO:0000255" key="3">
    <source>
        <dbReference type="PROSITE-ProRule" id="PRU01163"/>
    </source>
</evidence>
<evidence type="ECO:0000269" key="4">
    <source>
    </source>
</evidence>
<evidence type="ECO:0000269" key="5">
    <source>
    </source>
</evidence>
<evidence type="ECO:0000269" key="6">
    <source>
    </source>
</evidence>
<evidence type="ECO:0000269" key="7">
    <source ref="8"/>
</evidence>
<evidence type="ECO:0000303" key="8">
    <source>
    </source>
</evidence>
<evidence type="ECO:0000305" key="9"/>
<evidence type="ECO:0000305" key="10">
    <source>
    </source>
</evidence>
<evidence type="ECO:0000312" key="11">
    <source>
        <dbReference type="HGNC" id="HGNC:16732"/>
    </source>
</evidence>
<evidence type="ECO:0007829" key="12">
    <source>
        <dbReference type="PDB" id="3RMU"/>
    </source>
</evidence>
<evidence type="ECO:0007829" key="13">
    <source>
        <dbReference type="PDB" id="6QH4"/>
    </source>
</evidence>
<keyword id="KW-0002">3D-structure</keyword>
<keyword id="KW-0007">Acetylation</keyword>
<keyword id="KW-0170">Cobalt</keyword>
<keyword id="KW-0413">Isomerase</keyword>
<keyword id="KW-0479">Metal-binding</keyword>
<keyword id="KW-0496">Mitochondrion</keyword>
<keyword id="KW-1267">Proteomics identification</keyword>
<keyword id="KW-1185">Reference proteome</keyword>
<keyword id="KW-0809">Transit peptide</keyword>
<protein>
    <recommendedName>
        <fullName evidence="9">Methylmalonyl-CoA epimerase, mitochondrial</fullName>
        <ecNumber evidence="4">5.1.99.1</ecNumber>
    </recommendedName>
    <alternativeName>
        <fullName evidence="8">DL-methylmalonyl-CoA racemase</fullName>
    </alternativeName>
</protein>
<name>MCEE_HUMAN</name>
<sequence length="176" mass="18749">MARVLKAAAANAVGLFSRLQAPIPTVRASSTSQPLDQVTGSVWNLGRLNHVAIAVPDLEKAAAFYKNILGAQVSEAVPLPEHGVSVVFVNLGNTKMELLHPLGRDSPIAGFLQKNKAGGMHHICIEVDNINAAVMDLKKKKIRSLSEEVKIGAHGKPVIFLHPKDCGGVLVELEQA</sequence>
<reference key="1">
    <citation type="journal article" date="2001" name="J. Biol. Chem.">
        <title>Identification of the human methylmalonyl-CoA racemase gene based on the analysis of prokaryotic gene arrangements. Implications for decoding the human genome.</title>
        <authorList>
            <person name="Bobik T.A."/>
            <person name="Rasche M.E."/>
        </authorList>
    </citation>
    <scope>NUCLEOTIDE SEQUENCE [MRNA]</scope>
    <scope>FUNCTION</scope>
    <scope>CATALYTIC ACTIVITY</scope>
    <source>
        <tissue>Liver</tissue>
    </source>
</reference>
<reference key="2">
    <citation type="journal article" date="2005" name="Nature">
        <title>Generation and annotation of the DNA sequences of human chromosomes 2 and 4.</title>
        <authorList>
            <person name="Hillier L.W."/>
            <person name="Graves T.A."/>
            <person name="Fulton R.S."/>
            <person name="Fulton L.A."/>
            <person name="Pepin K.H."/>
            <person name="Minx P."/>
            <person name="Wagner-McPherson C."/>
            <person name="Layman D."/>
            <person name="Wylie K."/>
            <person name="Sekhon M."/>
            <person name="Becker M.C."/>
            <person name="Fewell G.A."/>
            <person name="Delehaunty K.D."/>
            <person name="Miner T.L."/>
            <person name="Nash W.E."/>
            <person name="Kremitzki C."/>
            <person name="Oddy L."/>
            <person name="Du H."/>
            <person name="Sun H."/>
            <person name="Bradshaw-Cordum H."/>
            <person name="Ali J."/>
            <person name="Carter J."/>
            <person name="Cordes M."/>
            <person name="Harris A."/>
            <person name="Isak A."/>
            <person name="van Brunt A."/>
            <person name="Nguyen C."/>
            <person name="Du F."/>
            <person name="Courtney L."/>
            <person name="Kalicki J."/>
            <person name="Ozersky P."/>
            <person name="Abbott S."/>
            <person name="Armstrong J."/>
            <person name="Belter E.A."/>
            <person name="Caruso L."/>
            <person name="Cedroni M."/>
            <person name="Cotton M."/>
            <person name="Davidson T."/>
            <person name="Desai A."/>
            <person name="Elliott G."/>
            <person name="Erb T."/>
            <person name="Fronick C."/>
            <person name="Gaige T."/>
            <person name="Haakenson W."/>
            <person name="Haglund K."/>
            <person name="Holmes A."/>
            <person name="Harkins R."/>
            <person name="Kim K."/>
            <person name="Kruchowski S.S."/>
            <person name="Strong C.M."/>
            <person name="Grewal N."/>
            <person name="Goyea E."/>
            <person name="Hou S."/>
            <person name="Levy A."/>
            <person name="Martinka S."/>
            <person name="Mead K."/>
            <person name="McLellan M.D."/>
            <person name="Meyer R."/>
            <person name="Randall-Maher J."/>
            <person name="Tomlinson C."/>
            <person name="Dauphin-Kohlberg S."/>
            <person name="Kozlowicz-Reilly A."/>
            <person name="Shah N."/>
            <person name="Swearengen-Shahid S."/>
            <person name="Snider J."/>
            <person name="Strong J.T."/>
            <person name="Thompson J."/>
            <person name="Yoakum M."/>
            <person name="Leonard S."/>
            <person name="Pearman C."/>
            <person name="Trani L."/>
            <person name="Radionenko M."/>
            <person name="Waligorski J.E."/>
            <person name="Wang C."/>
            <person name="Rock S.M."/>
            <person name="Tin-Wollam A.-M."/>
            <person name="Maupin R."/>
            <person name="Latreille P."/>
            <person name="Wendl M.C."/>
            <person name="Yang S.-P."/>
            <person name="Pohl C."/>
            <person name="Wallis J.W."/>
            <person name="Spieth J."/>
            <person name="Bieri T.A."/>
            <person name="Berkowicz N."/>
            <person name="Nelson J.O."/>
            <person name="Osborne J."/>
            <person name="Ding L."/>
            <person name="Meyer R."/>
            <person name="Sabo A."/>
            <person name="Shotland Y."/>
            <person name="Sinha P."/>
            <person name="Wohldmann P.E."/>
            <person name="Cook L.L."/>
            <person name="Hickenbotham M.T."/>
            <person name="Eldred J."/>
            <person name="Williams D."/>
            <person name="Jones T.A."/>
            <person name="She X."/>
            <person name="Ciccarelli F.D."/>
            <person name="Izaurralde E."/>
            <person name="Taylor J."/>
            <person name="Schmutz J."/>
            <person name="Myers R.M."/>
            <person name="Cox D.R."/>
            <person name="Huang X."/>
            <person name="McPherson J.D."/>
            <person name="Mardis E.R."/>
            <person name="Clifton S.W."/>
            <person name="Warren W.C."/>
            <person name="Chinwalla A.T."/>
            <person name="Eddy S.R."/>
            <person name="Marra M.A."/>
            <person name="Ovcharenko I."/>
            <person name="Furey T.S."/>
            <person name="Miller W."/>
            <person name="Eichler E.E."/>
            <person name="Bork P."/>
            <person name="Suyama M."/>
            <person name="Torrents D."/>
            <person name="Waterston R.H."/>
            <person name="Wilson R.K."/>
        </authorList>
    </citation>
    <scope>NUCLEOTIDE SEQUENCE [LARGE SCALE GENOMIC DNA]</scope>
</reference>
<reference key="3">
    <citation type="submission" date="2005-07" db="EMBL/GenBank/DDBJ databases">
        <authorList>
            <person name="Mural R.J."/>
            <person name="Istrail S."/>
            <person name="Sutton G.G."/>
            <person name="Florea L."/>
            <person name="Halpern A.L."/>
            <person name="Mobarry C.M."/>
            <person name="Lippert R."/>
            <person name="Walenz B."/>
            <person name="Shatkay H."/>
            <person name="Dew I."/>
            <person name="Miller J.R."/>
            <person name="Flanigan M.J."/>
            <person name="Edwards N.J."/>
            <person name="Bolanos R."/>
            <person name="Fasulo D."/>
            <person name="Halldorsson B.V."/>
            <person name="Hannenhalli S."/>
            <person name="Turner R."/>
            <person name="Yooseph S."/>
            <person name="Lu F."/>
            <person name="Nusskern D.R."/>
            <person name="Shue B.C."/>
            <person name="Zheng X.H."/>
            <person name="Zhong F."/>
            <person name="Delcher A.L."/>
            <person name="Huson D.H."/>
            <person name="Kravitz S.A."/>
            <person name="Mouchard L."/>
            <person name="Reinert K."/>
            <person name="Remington K.A."/>
            <person name="Clark A.G."/>
            <person name="Waterman M.S."/>
            <person name="Eichler E.E."/>
            <person name="Adams M.D."/>
            <person name="Hunkapiller M.W."/>
            <person name="Myers E.W."/>
            <person name="Venter J.C."/>
        </authorList>
    </citation>
    <scope>NUCLEOTIDE SEQUENCE [LARGE SCALE GENOMIC DNA]</scope>
</reference>
<reference key="4">
    <citation type="journal article" date="2004" name="Genome Res.">
        <title>The status, quality, and expansion of the NIH full-length cDNA project: the Mammalian Gene Collection (MGC).</title>
        <authorList>
            <consortium name="The MGC Project Team"/>
        </authorList>
    </citation>
    <scope>NUCLEOTIDE SEQUENCE [LARGE SCALE MRNA]</scope>
    <scope>VARIANT LEU-104</scope>
    <source>
        <tissue>Liver</tissue>
    </source>
</reference>
<reference key="5">
    <citation type="journal article" date="2006" name="Hum. Mutat.">
        <title>A homozygous nonsense mutation in the methylmalonyl-CoA epimerase gene (MCEE) results in mild methylmalonic aciduria.</title>
        <authorList>
            <person name="Bikker H."/>
            <person name="Bakker H.D."/>
            <person name="Abeling N.G.G.M."/>
            <person name="Poll-The B.T."/>
            <person name="Kleijer W.J."/>
            <person name="Rosenblatt D.S."/>
            <person name="Waterham H.R."/>
            <person name="Wanders R.J.A."/>
            <person name="Duran M."/>
        </authorList>
    </citation>
    <scope>INVOLVEMENT IN MCEED</scope>
</reference>
<reference key="6">
    <citation type="journal article" date="2014" name="J. Proteomics">
        <title>An enzyme assisted RP-RPLC approach for in-depth analysis of human liver phosphoproteome.</title>
        <authorList>
            <person name="Bian Y."/>
            <person name="Song C."/>
            <person name="Cheng K."/>
            <person name="Dong M."/>
            <person name="Wang F."/>
            <person name="Huang J."/>
            <person name="Sun D."/>
            <person name="Wang L."/>
            <person name="Ye M."/>
            <person name="Zou H."/>
        </authorList>
    </citation>
    <scope>IDENTIFICATION BY MASS SPECTROMETRY [LARGE SCALE ANALYSIS]</scope>
    <source>
        <tissue>Liver</tissue>
    </source>
</reference>
<reference key="7">
    <citation type="journal article" date="2015" name="Proteomics">
        <title>N-terminome analysis of the human mitochondrial proteome.</title>
        <authorList>
            <person name="Vaca Jacome A.S."/>
            <person name="Rabilloud T."/>
            <person name="Schaeffer-Reiss C."/>
            <person name="Rompais M."/>
            <person name="Ayoub D."/>
            <person name="Lane L."/>
            <person name="Bairoch A."/>
            <person name="Van Dorsselaer A."/>
            <person name="Carapito C."/>
        </authorList>
    </citation>
    <scope>IDENTIFICATION BY MASS SPECTROMETRY [LARGE SCALE ANALYSIS]</scope>
</reference>
<reference key="8">
    <citation type="submission" date="2011-04" db="PDB data bank">
        <title>Crystal structure of human methylmalonyl-CoA epimerase, MCEE.</title>
        <authorList>
            <consortium name="Structural genomics consortium (SGC)"/>
        </authorList>
    </citation>
    <scope>X-RAY CRYSTALLOGRAPHY (1.80 ANGSTROMS) OF 45-176 IN COMPLEX WITH COBALT</scope>
</reference>
<proteinExistence type="evidence at protein level"/>
<feature type="transit peptide" description="Mitochondrion" evidence="2">
    <location>
        <begin position="1"/>
        <end position="36"/>
    </location>
</feature>
<feature type="chain" id="PRO_0000012283" description="Methylmalonyl-CoA epimerase, mitochondrial">
    <location>
        <begin position="37"/>
        <end position="176"/>
    </location>
</feature>
<feature type="domain" description="VOC" evidence="3">
    <location>
        <begin position="47"/>
        <end position="176"/>
    </location>
</feature>
<feature type="binding site" evidence="7">
    <location>
        <position position="50"/>
    </location>
    <ligand>
        <name>Co(2+)</name>
        <dbReference type="ChEBI" id="CHEBI:48828"/>
    </ligand>
</feature>
<feature type="binding site" evidence="7">
    <location>
        <position position="122"/>
    </location>
    <ligand>
        <name>Co(2+)</name>
        <dbReference type="ChEBI" id="CHEBI:48828"/>
    </ligand>
</feature>
<feature type="binding site" evidence="7">
    <location>
        <position position="172"/>
    </location>
    <ligand>
        <name>Co(2+)</name>
        <dbReference type="ChEBI" id="CHEBI:48828"/>
    </ligand>
</feature>
<feature type="modified residue" description="N6-succinyllysine" evidence="1">
    <location>
        <position position="114"/>
    </location>
</feature>
<feature type="modified residue" description="N6-acetyllysine; alternate" evidence="1">
    <location>
        <position position="150"/>
    </location>
</feature>
<feature type="modified residue" description="N6-succinyllysine; alternate" evidence="1">
    <location>
        <position position="150"/>
    </location>
</feature>
<feature type="sequence variant" id="VAR_049248" description="In dbSNP:rs11541017.">
    <original>A</original>
    <variation>V</variation>
    <location>
        <position position="76"/>
    </location>
</feature>
<feature type="sequence variant" id="VAR_019511" description="In dbSNP:rs6748672." evidence="5">
    <original>R</original>
    <variation>L</variation>
    <location>
        <position position="104"/>
    </location>
</feature>
<feature type="strand" evidence="12">
    <location>
        <begin position="45"/>
        <end position="54"/>
    </location>
</feature>
<feature type="helix" evidence="12">
    <location>
        <begin position="58"/>
        <end position="67"/>
    </location>
</feature>
<feature type="strand" evidence="12">
    <location>
        <begin position="77"/>
        <end position="79"/>
    </location>
</feature>
<feature type="helix" evidence="12">
    <location>
        <begin position="80"/>
        <end position="82"/>
    </location>
</feature>
<feature type="strand" evidence="12">
    <location>
        <begin position="84"/>
        <end position="90"/>
    </location>
</feature>
<feature type="strand" evidence="12">
    <location>
        <begin position="92"/>
        <end position="101"/>
    </location>
</feature>
<feature type="helix" evidence="12">
    <location>
        <begin position="109"/>
        <end position="114"/>
    </location>
</feature>
<feature type="strand" evidence="12">
    <location>
        <begin position="119"/>
        <end position="128"/>
    </location>
</feature>
<feature type="helix" evidence="12">
    <location>
        <begin position="130"/>
        <end position="139"/>
    </location>
</feature>
<feature type="strand" evidence="12">
    <location>
        <begin position="155"/>
        <end position="161"/>
    </location>
</feature>
<feature type="helix" evidence="13">
    <location>
        <begin position="163"/>
        <end position="166"/>
    </location>
</feature>
<feature type="strand" evidence="12">
    <location>
        <begin position="171"/>
        <end position="175"/>
    </location>
</feature>
<dbReference type="EC" id="5.1.99.1" evidence="4"/>
<dbReference type="EMBL" id="AF364547">
    <property type="protein sequence ID" value="AAK52052.1"/>
    <property type="molecule type" value="mRNA"/>
</dbReference>
<dbReference type="EMBL" id="AC007881">
    <property type="protein sequence ID" value="AAY14749.1"/>
    <property type="molecule type" value="Genomic_DNA"/>
</dbReference>
<dbReference type="EMBL" id="CH471053">
    <property type="protein sequence ID" value="EAW99778.1"/>
    <property type="molecule type" value="Genomic_DNA"/>
</dbReference>
<dbReference type="EMBL" id="BC020825">
    <property type="protein sequence ID" value="AAH20825.1"/>
    <property type="molecule type" value="mRNA"/>
</dbReference>
<dbReference type="CCDS" id="CCDS1915.1"/>
<dbReference type="RefSeq" id="NP_115990.3">
    <property type="nucleotide sequence ID" value="NM_032601.3"/>
</dbReference>
<dbReference type="PDB" id="3RMU">
    <property type="method" value="X-ray"/>
    <property type="resolution" value="1.80 A"/>
    <property type="chains" value="A/B/C/D=45-176"/>
</dbReference>
<dbReference type="PDB" id="6QH4">
    <property type="method" value="X-ray"/>
    <property type="resolution" value="1.92 A"/>
    <property type="chains" value="A/B/C/D=45-176"/>
</dbReference>
<dbReference type="PDBsum" id="3RMU"/>
<dbReference type="PDBsum" id="6QH4"/>
<dbReference type="SMR" id="Q96PE7"/>
<dbReference type="BioGRID" id="124208">
    <property type="interactions" value="9"/>
</dbReference>
<dbReference type="FunCoup" id="Q96PE7">
    <property type="interactions" value="507"/>
</dbReference>
<dbReference type="IntAct" id="Q96PE7">
    <property type="interactions" value="9"/>
</dbReference>
<dbReference type="MINT" id="Q96PE7"/>
<dbReference type="STRING" id="9606.ENSP00000244217"/>
<dbReference type="SwissLipids" id="SLP:000001255"/>
<dbReference type="iPTMnet" id="Q96PE7"/>
<dbReference type="PhosphoSitePlus" id="Q96PE7"/>
<dbReference type="BioMuta" id="MCEE"/>
<dbReference type="jPOST" id="Q96PE7"/>
<dbReference type="MassIVE" id="Q96PE7"/>
<dbReference type="PaxDb" id="9606-ENSP00000244217"/>
<dbReference type="PeptideAtlas" id="Q96PE7"/>
<dbReference type="ProteomicsDB" id="77685"/>
<dbReference type="Pumba" id="Q96PE7"/>
<dbReference type="Antibodypedia" id="31195">
    <property type="antibodies" value="207 antibodies from 22 providers"/>
</dbReference>
<dbReference type="DNASU" id="84693"/>
<dbReference type="Ensembl" id="ENST00000244217.6">
    <property type="protein sequence ID" value="ENSP00000244217.5"/>
    <property type="gene ID" value="ENSG00000124370.11"/>
</dbReference>
<dbReference type="GeneID" id="84693"/>
<dbReference type="KEGG" id="hsa:84693"/>
<dbReference type="MANE-Select" id="ENST00000244217.6">
    <property type="protein sequence ID" value="ENSP00000244217.5"/>
    <property type="RefSeq nucleotide sequence ID" value="NM_032601.4"/>
    <property type="RefSeq protein sequence ID" value="NP_115990.3"/>
</dbReference>
<dbReference type="UCSC" id="uc002shs.3">
    <property type="organism name" value="human"/>
</dbReference>
<dbReference type="AGR" id="HGNC:16732"/>
<dbReference type="CTD" id="84693"/>
<dbReference type="DisGeNET" id="84693"/>
<dbReference type="GeneCards" id="MCEE"/>
<dbReference type="GeneReviews" id="MCEE"/>
<dbReference type="HGNC" id="HGNC:16732">
    <property type="gene designation" value="MCEE"/>
</dbReference>
<dbReference type="HPA" id="ENSG00000124370">
    <property type="expression patterns" value="Low tissue specificity"/>
</dbReference>
<dbReference type="MalaCards" id="MCEE"/>
<dbReference type="MIM" id="251120">
    <property type="type" value="phenotype"/>
</dbReference>
<dbReference type="MIM" id="608419">
    <property type="type" value="gene"/>
</dbReference>
<dbReference type="neXtProt" id="NX_Q96PE7"/>
<dbReference type="OpenTargets" id="ENSG00000124370"/>
<dbReference type="Orphanet" id="308425">
    <property type="disease" value="Methylmalonic acidemia due to methylmalonyl-CoA epimerase deficiency"/>
</dbReference>
<dbReference type="PharmGKB" id="PA30683"/>
<dbReference type="VEuPathDB" id="HostDB:ENSG00000124370"/>
<dbReference type="eggNOG" id="KOG2944">
    <property type="taxonomic scope" value="Eukaryota"/>
</dbReference>
<dbReference type="GeneTree" id="ENSGT00940000153941"/>
<dbReference type="HOGENOM" id="CLU_046006_5_0_1"/>
<dbReference type="InParanoid" id="Q96PE7"/>
<dbReference type="OMA" id="IHHICYE"/>
<dbReference type="OrthoDB" id="16820at2759"/>
<dbReference type="PAN-GO" id="Q96PE7">
    <property type="GO annotations" value="2 GO annotations based on evolutionary models"/>
</dbReference>
<dbReference type="PhylomeDB" id="Q96PE7"/>
<dbReference type="TreeFam" id="TF313417"/>
<dbReference type="BioCyc" id="MetaCyc:HS13124-MONOMER"/>
<dbReference type="BRENDA" id="5.1.99.1">
    <property type="organism ID" value="2681"/>
</dbReference>
<dbReference type="PathwayCommons" id="Q96PE7"/>
<dbReference type="Reactome" id="R-HSA-71032">
    <property type="pathway name" value="Propionyl-CoA catabolism"/>
</dbReference>
<dbReference type="SignaLink" id="Q96PE7"/>
<dbReference type="BioGRID-ORCS" id="84693">
    <property type="hits" value="16 hits in 1162 CRISPR screens"/>
</dbReference>
<dbReference type="ChiTaRS" id="MCEE">
    <property type="organism name" value="human"/>
</dbReference>
<dbReference type="EvolutionaryTrace" id="Q96PE7"/>
<dbReference type="GenomeRNAi" id="84693"/>
<dbReference type="Pharos" id="Q96PE7">
    <property type="development level" value="Tbio"/>
</dbReference>
<dbReference type="PRO" id="PR:Q96PE7"/>
<dbReference type="Proteomes" id="UP000005640">
    <property type="component" value="Chromosome 2"/>
</dbReference>
<dbReference type="RNAct" id="Q96PE7">
    <property type="molecule type" value="protein"/>
</dbReference>
<dbReference type="Bgee" id="ENSG00000124370">
    <property type="expression patterns" value="Expressed in body of pancreas and 179 other cell types or tissues"/>
</dbReference>
<dbReference type="ExpressionAtlas" id="Q96PE7">
    <property type="expression patterns" value="baseline and differential"/>
</dbReference>
<dbReference type="GO" id="GO:0005759">
    <property type="term" value="C:mitochondrial matrix"/>
    <property type="evidence" value="ECO:0000304"/>
    <property type="project" value="Reactome"/>
</dbReference>
<dbReference type="GO" id="GO:0005739">
    <property type="term" value="C:mitochondrion"/>
    <property type="evidence" value="ECO:0006056"/>
    <property type="project" value="FlyBase"/>
</dbReference>
<dbReference type="GO" id="GO:0046872">
    <property type="term" value="F:metal ion binding"/>
    <property type="evidence" value="ECO:0007669"/>
    <property type="project" value="UniProtKB-KW"/>
</dbReference>
<dbReference type="GO" id="GO:0004493">
    <property type="term" value="F:methylmalonyl-CoA epimerase activity"/>
    <property type="evidence" value="ECO:0000314"/>
    <property type="project" value="UniProtKB"/>
</dbReference>
<dbReference type="GO" id="GO:0046491">
    <property type="term" value="P:L-methylmalonyl-CoA metabolic process"/>
    <property type="evidence" value="ECO:0000314"/>
    <property type="project" value="UniProtKB"/>
</dbReference>
<dbReference type="GO" id="GO:0019626">
    <property type="term" value="P:short-chain fatty acid catabolic process"/>
    <property type="evidence" value="ECO:0000304"/>
    <property type="project" value="Reactome"/>
</dbReference>
<dbReference type="CDD" id="cd07249">
    <property type="entry name" value="MMCE"/>
    <property type="match status" value="1"/>
</dbReference>
<dbReference type="FunFam" id="3.10.180.10:FF:000003">
    <property type="entry name" value="Methylmalonyl-CoA epimerase, mitochondrial"/>
    <property type="match status" value="1"/>
</dbReference>
<dbReference type="Gene3D" id="3.10.180.10">
    <property type="entry name" value="2,3-Dihydroxybiphenyl 1,2-Dioxygenase, domain 1"/>
    <property type="match status" value="1"/>
</dbReference>
<dbReference type="InterPro" id="IPR029068">
    <property type="entry name" value="Glyas_Bleomycin-R_OHBP_Dase"/>
</dbReference>
<dbReference type="InterPro" id="IPR017515">
    <property type="entry name" value="MeMalonyl-CoA_epimerase"/>
</dbReference>
<dbReference type="InterPro" id="IPR051785">
    <property type="entry name" value="MMCE/EMCE_epimerase"/>
</dbReference>
<dbReference type="InterPro" id="IPR037523">
    <property type="entry name" value="VOC"/>
</dbReference>
<dbReference type="NCBIfam" id="TIGR03081">
    <property type="entry name" value="metmalonyl_epim"/>
    <property type="match status" value="1"/>
</dbReference>
<dbReference type="PANTHER" id="PTHR43048">
    <property type="entry name" value="METHYLMALONYL-COA EPIMERASE"/>
    <property type="match status" value="1"/>
</dbReference>
<dbReference type="PANTHER" id="PTHR43048:SF3">
    <property type="entry name" value="METHYLMALONYL-COA EPIMERASE, MITOCHONDRIAL"/>
    <property type="match status" value="1"/>
</dbReference>
<dbReference type="Pfam" id="PF13669">
    <property type="entry name" value="Glyoxalase_4"/>
    <property type="match status" value="1"/>
</dbReference>
<dbReference type="SUPFAM" id="SSF54593">
    <property type="entry name" value="Glyoxalase/Bleomycin resistance protein/Dihydroxybiphenyl dioxygenase"/>
    <property type="match status" value="1"/>
</dbReference>
<dbReference type="PROSITE" id="PS51819">
    <property type="entry name" value="VOC"/>
    <property type="match status" value="1"/>
</dbReference>
<organism>
    <name type="scientific">Homo sapiens</name>
    <name type="common">Human</name>
    <dbReference type="NCBI Taxonomy" id="9606"/>
    <lineage>
        <taxon>Eukaryota</taxon>
        <taxon>Metazoa</taxon>
        <taxon>Chordata</taxon>
        <taxon>Craniata</taxon>
        <taxon>Vertebrata</taxon>
        <taxon>Euteleostomi</taxon>
        <taxon>Mammalia</taxon>
        <taxon>Eutheria</taxon>
        <taxon>Euarchontoglires</taxon>
        <taxon>Primates</taxon>
        <taxon>Haplorrhini</taxon>
        <taxon>Catarrhini</taxon>
        <taxon>Hominidae</taxon>
        <taxon>Homo</taxon>
    </lineage>
</organism>
<gene>
    <name evidence="11" type="primary">MCEE</name>
</gene>
<accession>Q96PE7</accession>
<accession>Q53TP1</accession>
<accession>Q8WW63</accession>